<comment type="function">
    <text evidence="1">Excises uracil residues from the DNA which can arise as a result of misincorporation of dUMP residues by DNA polymerase or due to deamination of cytosine.</text>
</comment>
<comment type="catalytic activity">
    <reaction evidence="1">
        <text>Hydrolyzes single-stranded DNA or mismatched double-stranded DNA and polynucleotides, releasing free uracil.</text>
        <dbReference type="EC" id="3.2.2.27"/>
    </reaction>
</comment>
<comment type="subcellular location">
    <subcellularLocation>
        <location evidence="1">Cytoplasm</location>
    </subcellularLocation>
</comment>
<comment type="similarity">
    <text evidence="1">Belongs to the uracil-DNA glycosylase (UDG) superfamily. UNG family.</text>
</comment>
<reference key="1">
    <citation type="journal article" date="2007" name="J. Bacteriol.">
        <title>Genome sequence and analysis of the soil cellulolytic actinomycete Thermobifida fusca YX.</title>
        <authorList>
            <person name="Lykidis A."/>
            <person name="Mavromatis K."/>
            <person name="Ivanova N."/>
            <person name="Anderson I."/>
            <person name="Land M."/>
            <person name="DiBartolo G."/>
            <person name="Martinez M."/>
            <person name="Lapidus A."/>
            <person name="Lucas S."/>
            <person name="Copeland A."/>
            <person name="Richardson P."/>
            <person name="Wilson D.B."/>
            <person name="Kyrpides N."/>
        </authorList>
    </citation>
    <scope>NUCLEOTIDE SEQUENCE [LARGE SCALE GENOMIC DNA]</scope>
    <source>
        <strain>YX</strain>
    </source>
</reference>
<organism>
    <name type="scientific">Thermobifida fusca (strain YX)</name>
    <dbReference type="NCBI Taxonomy" id="269800"/>
    <lineage>
        <taxon>Bacteria</taxon>
        <taxon>Bacillati</taxon>
        <taxon>Actinomycetota</taxon>
        <taxon>Actinomycetes</taxon>
        <taxon>Streptosporangiales</taxon>
        <taxon>Nocardiopsidaceae</taxon>
        <taxon>Thermobifida</taxon>
    </lineage>
</organism>
<dbReference type="EC" id="3.2.2.27" evidence="1"/>
<dbReference type="EMBL" id="CP000088">
    <property type="protein sequence ID" value="AAZ55379.1"/>
    <property type="molecule type" value="Genomic_DNA"/>
</dbReference>
<dbReference type="SMR" id="Q47Q90"/>
<dbReference type="STRING" id="269800.Tfu_1341"/>
<dbReference type="KEGG" id="tfu:Tfu_1341"/>
<dbReference type="eggNOG" id="COG0692">
    <property type="taxonomic scope" value="Bacteria"/>
</dbReference>
<dbReference type="HOGENOM" id="CLU_032162_3_1_11"/>
<dbReference type="GO" id="GO:0005737">
    <property type="term" value="C:cytoplasm"/>
    <property type="evidence" value="ECO:0007669"/>
    <property type="project" value="UniProtKB-SubCell"/>
</dbReference>
<dbReference type="GO" id="GO:0004844">
    <property type="term" value="F:uracil DNA N-glycosylase activity"/>
    <property type="evidence" value="ECO:0007669"/>
    <property type="project" value="UniProtKB-UniRule"/>
</dbReference>
<dbReference type="GO" id="GO:0097510">
    <property type="term" value="P:base-excision repair, AP site formation via deaminated base removal"/>
    <property type="evidence" value="ECO:0007669"/>
    <property type="project" value="TreeGrafter"/>
</dbReference>
<dbReference type="CDD" id="cd10027">
    <property type="entry name" value="UDG-F1-like"/>
    <property type="match status" value="1"/>
</dbReference>
<dbReference type="FunFam" id="3.40.470.10:FF:000006">
    <property type="entry name" value="Uracil-DNA glycosylase"/>
    <property type="match status" value="1"/>
</dbReference>
<dbReference type="Gene3D" id="3.40.470.10">
    <property type="entry name" value="Uracil-DNA glycosylase-like domain"/>
    <property type="match status" value="1"/>
</dbReference>
<dbReference type="HAMAP" id="MF_00148">
    <property type="entry name" value="UDG"/>
    <property type="match status" value="1"/>
</dbReference>
<dbReference type="InterPro" id="IPR002043">
    <property type="entry name" value="UDG_fam1"/>
</dbReference>
<dbReference type="InterPro" id="IPR018085">
    <property type="entry name" value="Ura-DNA_Glyclase_AS"/>
</dbReference>
<dbReference type="InterPro" id="IPR005122">
    <property type="entry name" value="Uracil-DNA_glycosylase-like"/>
</dbReference>
<dbReference type="InterPro" id="IPR036895">
    <property type="entry name" value="Uracil-DNA_glycosylase-like_sf"/>
</dbReference>
<dbReference type="NCBIfam" id="NF003588">
    <property type="entry name" value="PRK05254.1-1"/>
    <property type="match status" value="1"/>
</dbReference>
<dbReference type="NCBIfam" id="NF003592">
    <property type="entry name" value="PRK05254.1-5"/>
    <property type="match status" value="1"/>
</dbReference>
<dbReference type="NCBIfam" id="TIGR00628">
    <property type="entry name" value="ung"/>
    <property type="match status" value="1"/>
</dbReference>
<dbReference type="PANTHER" id="PTHR11264">
    <property type="entry name" value="URACIL-DNA GLYCOSYLASE"/>
    <property type="match status" value="1"/>
</dbReference>
<dbReference type="PANTHER" id="PTHR11264:SF0">
    <property type="entry name" value="URACIL-DNA GLYCOSYLASE"/>
    <property type="match status" value="1"/>
</dbReference>
<dbReference type="Pfam" id="PF03167">
    <property type="entry name" value="UDG"/>
    <property type="match status" value="1"/>
</dbReference>
<dbReference type="SMART" id="SM00986">
    <property type="entry name" value="UDG"/>
    <property type="match status" value="1"/>
</dbReference>
<dbReference type="SMART" id="SM00987">
    <property type="entry name" value="UreE_C"/>
    <property type="match status" value="1"/>
</dbReference>
<dbReference type="SUPFAM" id="SSF52141">
    <property type="entry name" value="Uracil-DNA glycosylase-like"/>
    <property type="match status" value="1"/>
</dbReference>
<dbReference type="PROSITE" id="PS00130">
    <property type="entry name" value="U_DNA_GLYCOSYLASE"/>
    <property type="match status" value="1"/>
</dbReference>
<protein>
    <recommendedName>
        <fullName evidence="1">Uracil-DNA glycosylase</fullName>
        <shortName evidence="1">UDG</shortName>
        <ecNumber evidence="1">3.2.2.27</ecNumber>
    </recommendedName>
</protein>
<proteinExistence type="inferred from homology"/>
<feature type="chain" id="PRO_1000199802" description="Uracil-DNA glycosylase">
    <location>
        <begin position="1"/>
        <end position="228"/>
    </location>
</feature>
<feature type="active site" description="Proton acceptor" evidence="1">
    <location>
        <position position="71"/>
    </location>
</feature>
<accession>Q47Q90</accession>
<keyword id="KW-0963">Cytoplasm</keyword>
<keyword id="KW-0227">DNA damage</keyword>
<keyword id="KW-0234">DNA repair</keyword>
<keyword id="KW-0378">Hydrolase</keyword>
<sequence length="228" mass="25188">MVSAMPRPLHEIMESGWAEALEPVADRIAQMGDFLRQEVAEGRTYLPAGENVLRAFQQPFDQVRVLLVGQDPYPTPGHAVGLSFSVSPEVRRLPGSLRNIFLEYTQDLGYPMPSSGDLTPWAERGVLLLNRVLTVTPRKPGSHRGKGWEAVTDQAIRALAARGKPLVAILWGRDARSLRPLMPDVPCVESAHPSPMSAHHGFFGSRPFSRANALLEQQGAEPMDWRLP</sequence>
<name>UNG_THEFY</name>
<gene>
    <name evidence="1" type="primary">ung</name>
    <name type="ordered locus">Tfu_1341</name>
</gene>
<evidence type="ECO:0000255" key="1">
    <source>
        <dbReference type="HAMAP-Rule" id="MF_00148"/>
    </source>
</evidence>